<comment type="function">
    <text evidence="1">Catalyzes the NADPH-dependent reduction of L-glutamate 5-phosphate into L-glutamate 5-semialdehyde and phosphate. The product spontaneously undergoes cyclization to form 1-pyrroline-5-carboxylate.</text>
</comment>
<comment type="catalytic activity">
    <reaction evidence="1">
        <text>L-glutamate 5-semialdehyde + phosphate + NADP(+) = L-glutamyl 5-phosphate + NADPH + H(+)</text>
        <dbReference type="Rhea" id="RHEA:19541"/>
        <dbReference type="ChEBI" id="CHEBI:15378"/>
        <dbReference type="ChEBI" id="CHEBI:43474"/>
        <dbReference type="ChEBI" id="CHEBI:57783"/>
        <dbReference type="ChEBI" id="CHEBI:58066"/>
        <dbReference type="ChEBI" id="CHEBI:58274"/>
        <dbReference type="ChEBI" id="CHEBI:58349"/>
        <dbReference type="EC" id="1.2.1.41"/>
    </reaction>
</comment>
<comment type="pathway">
    <text evidence="1">Amino-acid biosynthesis; L-proline biosynthesis; L-glutamate 5-semialdehyde from L-glutamate: step 2/2.</text>
</comment>
<comment type="subcellular location">
    <subcellularLocation>
        <location evidence="1">Cytoplasm</location>
    </subcellularLocation>
</comment>
<comment type="similarity">
    <text evidence="1">Belongs to the gamma-glutamyl phosphate reductase family.</text>
</comment>
<sequence length="442" mass="47155">MSEILNIAKAAKASCEQLLNLSAQAKSQILNAVADELVRQKEAIKAANLLDLKAGENAGLSAALLDRLELTDARIEAMANGVREVAKFDEVVGEVLGGWRHPNGMQITKIRVPLGVLGIIYESRPNVSIDAAALALKSGNAVILRGSAAAISSNKFLVNLFNETGAKFGLPKGAVALVESTDKEAVGEMIKMHEFIDVLIPRGGKNLKDFIIQNATIPVIETGAGVCHIFVDESADVREAVEIIKNAKTQRPSTCNSVECVLLHERVAVKVLTSLARELDGVQLRVHEDLWAKFGENLGEISGDLDANLSGLKAEVKIGESSNGAQLVKADESDFGTEFLSLVLAVKCVSGVAEAVSYINSHSTHHSDAILSRDYANIERFLNAVDSAVVYANASTRFSDGGEFGFGGEIGISTQKLHARGPMGVRELTTSKYVVRGDGQIR</sequence>
<evidence type="ECO:0000255" key="1">
    <source>
        <dbReference type="HAMAP-Rule" id="MF_00412"/>
    </source>
</evidence>
<reference key="1">
    <citation type="submission" date="2007-07" db="EMBL/GenBank/DDBJ databases">
        <title>Genome sequence of Campylobacter curvus 525.92 isolated from human feces.</title>
        <authorList>
            <person name="Fouts D.E."/>
            <person name="Mongodin E.F."/>
            <person name="Puiu D."/>
            <person name="Sebastian Y."/>
            <person name="Miller W.G."/>
            <person name="Mandrell R.E."/>
            <person name="Lastovica A.J."/>
            <person name="Nelson K.E."/>
        </authorList>
    </citation>
    <scope>NUCLEOTIDE SEQUENCE [LARGE SCALE GENOMIC DNA]</scope>
    <source>
        <strain>525.92</strain>
    </source>
</reference>
<organism>
    <name type="scientific">Campylobacter curvus (strain 525.92)</name>
    <dbReference type="NCBI Taxonomy" id="360105"/>
    <lineage>
        <taxon>Bacteria</taxon>
        <taxon>Pseudomonadati</taxon>
        <taxon>Campylobacterota</taxon>
        <taxon>Epsilonproteobacteria</taxon>
        <taxon>Campylobacterales</taxon>
        <taxon>Campylobacteraceae</taxon>
        <taxon>Campylobacter</taxon>
    </lineage>
</organism>
<keyword id="KW-0028">Amino-acid biosynthesis</keyword>
<keyword id="KW-0963">Cytoplasm</keyword>
<keyword id="KW-0521">NADP</keyword>
<keyword id="KW-0560">Oxidoreductase</keyword>
<keyword id="KW-0641">Proline biosynthesis</keyword>
<keyword id="KW-1185">Reference proteome</keyword>
<protein>
    <recommendedName>
        <fullName evidence="1">Gamma-glutamyl phosphate reductase</fullName>
        <shortName evidence="1">GPR</shortName>
        <ecNumber evidence="1">1.2.1.41</ecNumber>
    </recommendedName>
    <alternativeName>
        <fullName evidence="1">Glutamate-5-semialdehyde dehydrogenase</fullName>
    </alternativeName>
    <alternativeName>
        <fullName evidence="1">Glutamyl-gamma-semialdehyde dehydrogenase</fullName>
        <shortName evidence="1">GSA dehydrogenase</shortName>
    </alternativeName>
</protein>
<name>PROA_CAMC5</name>
<feature type="chain" id="PRO_1000060838" description="Gamma-glutamyl phosphate reductase">
    <location>
        <begin position="1"/>
        <end position="442"/>
    </location>
</feature>
<dbReference type="EC" id="1.2.1.41" evidence="1"/>
<dbReference type="EMBL" id="CP000767">
    <property type="protein sequence ID" value="EAT99669.1"/>
    <property type="molecule type" value="Genomic_DNA"/>
</dbReference>
<dbReference type="RefSeq" id="WP_009649486.1">
    <property type="nucleotide sequence ID" value="NC_009715.2"/>
</dbReference>
<dbReference type="SMR" id="A7GVZ7"/>
<dbReference type="STRING" id="360105.CCV52592_0754"/>
<dbReference type="KEGG" id="ccv:CCV52592_0754"/>
<dbReference type="HOGENOM" id="CLU_030231_0_0_7"/>
<dbReference type="OrthoDB" id="9809970at2"/>
<dbReference type="UniPathway" id="UPA00098">
    <property type="reaction ID" value="UER00360"/>
</dbReference>
<dbReference type="Proteomes" id="UP000006380">
    <property type="component" value="Chromosome"/>
</dbReference>
<dbReference type="GO" id="GO:0005737">
    <property type="term" value="C:cytoplasm"/>
    <property type="evidence" value="ECO:0007669"/>
    <property type="project" value="UniProtKB-SubCell"/>
</dbReference>
<dbReference type="GO" id="GO:0004350">
    <property type="term" value="F:glutamate-5-semialdehyde dehydrogenase activity"/>
    <property type="evidence" value="ECO:0007669"/>
    <property type="project" value="UniProtKB-UniRule"/>
</dbReference>
<dbReference type="GO" id="GO:0050661">
    <property type="term" value="F:NADP binding"/>
    <property type="evidence" value="ECO:0007669"/>
    <property type="project" value="InterPro"/>
</dbReference>
<dbReference type="GO" id="GO:0055129">
    <property type="term" value="P:L-proline biosynthetic process"/>
    <property type="evidence" value="ECO:0007669"/>
    <property type="project" value="UniProtKB-UniRule"/>
</dbReference>
<dbReference type="CDD" id="cd07079">
    <property type="entry name" value="ALDH_F18-19_ProA-GPR"/>
    <property type="match status" value="1"/>
</dbReference>
<dbReference type="FunFam" id="3.40.309.10:FF:000006">
    <property type="entry name" value="Gamma-glutamyl phosphate reductase"/>
    <property type="match status" value="1"/>
</dbReference>
<dbReference type="Gene3D" id="3.40.605.10">
    <property type="entry name" value="Aldehyde Dehydrogenase, Chain A, domain 1"/>
    <property type="match status" value="1"/>
</dbReference>
<dbReference type="Gene3D" id="3.40.309.10">
    <property type="entry name" value="Aldehyde Dehydrogenase, Chain A, domain 2"/>
    <property type="match status" value="1"/>
</dbReference>
<dbReference type="HAMAP" id="MF_00412">
    <property type="entry name" value="ProA"/>
    <property type="match status" value="1"/>
</dbReference>
<dbReference type="InterPro" id="IPR016161">
    <property type="entry name" value="Ald_DH/histidinol_DH"/>
</dbReference>
<dbReference type="InterPro" id="IPR016163">
    <property type="entry name" value="Ald_DH_C"/>
</dbReference>
<dbReference type="InterPro" id="IPR016162">
    <property type="entry name" value="Ald_DH_N"/>
</dbReference>
<dbReference type="InterPro" id="IPR015590">
    <property type="entry name" value="Aldehyde_DH_dom"/>
</dbReference>
<dbReference type="InterPro" id="IPR020593">
    <property type="entry name" value="G-glutamylP_reductase_CS"/>
</dbReference>
<dbReference type="InterPro" id="IPR012134">
    <property type="entry name" value="Glu-5-SA_DH"/>
</dbReference>
<dbReference type="InterPro" id="IPR000965">
    <property type="entry name" value="GPR_dom"/>
</dbReference>
<dbReference type="NCBIfam" id="NF001221">
    <property type="entry name" value="PRK00197.1"/>
    <property type="match status" value="1"/>
</dbReference>
<dbReference type="NCBIfam" id="TIGR00407">
    <property type="entry name" value="proA"/>
    <property type="match status" value="1"/>
</dbReference>
<dbReference type="PANTHER" id="PTHR11063:SF8">
    <property type="entry name" value="DELTA-1-PYRROLINE-5-CARBOXYLATE SYNTHASE"/>
    <property type="match status" value="1"/>
</dbReference>
<dbReference type="PANTHER" id="PTHR11063">
    <property type="entry name" value="GLUTAMATE SEMIALDEHYDE DEHYDROGENASE"/>
    <property type="match status" value="1"/>
</dbReference>
<dbReference type="Pfam" id="PF00171">
    <property type="entry name" value="Aldedh"/>
    <property type="match status" value="1"/>
</dbReference>
<dbReference type="PIRSF" id="PIRSF000151">
    <property type="entry name" value="GPR"/>
    <property type="match status" value="1"/>
</dbReference>
<dbReference type="SUPFAM" id="SSF53720">
    <property type="entry name" value="ALDH-like"/>
    <property type="match status" value="1"/>
</dbReference>
<dbReference type="PROSITE" id="PS01223">
    <property type="entry name" value="PROA"/>
    <property type="match status" value="1"/>
</dbReference>
<proteinExistence type="inferred from homology"/>
<accession>A7GVZ7</accession>
<gene>
    <name evidence="1" type="primary">proA</name>
    <name type="ordered locus">Ccur92_00850</name>
    <name type="ORF">CCV52592_0754</name>
</gene>